<dbReference type="EC" id="4.6.1.12" evidence="1"/>
<dbReference type="EMBL" id="CP000744">
    <property type="protein sequence ID" value="ABR82412.1"/>
    <property type="molecule type" value="Genomic_DNA"/>
</dbReference>
<dbReference type="RefSeq" id="WP_003152340.1">
    <property type="nucleotide sequence ID" value="NC_009656.1"/>
</dbReference>
<dbReference type="SMR" id="A6V1G1"/>
<dbReference type="GeneID" id="77219892"/>
<dbReference type="KEGG" id="pap:PSPA7_1512"/>
<dbReference type="HOGENOM" id="CLU_084630_2_0_6"/>
<dbReference type="UniPathway" id="UPA00056">
    <property type="reaction ID" value="UER00095"/>
</dbReference>
<dbReference type="Proteomes" id="UP000001582">
    <property type="component" value="Chromosome"/>
</dbReference>
<dbReference type="GO" id="GO:0008685">
    <property type="term" value="F:2-C-methyl-D-erythritol 2,4-cyclodiphosphate synthase activity"/>
    <property type="evidence" value="ECO:0007669"/>
    <property type="project" value="UniProtKB-UniRule"/>
</dbReference>
<dbReference type="GO" id="GO:0046872">
    <property type="term" value="F:metal ion binding"/>
    <property type="evidence" value="ECO:0007669"/>
    <property type="project" value="UniProtKB-KW"/>
</dbReference>
<dbReference type="GO" id="GO:0019288">
    <property type="term" value="P:isopentenyl diphosphate biosynthetic process, methylerythritol 4-phosphate pathway"/>
    <property type="evidence" value="ECO:0007669"/>
    <property type="project" value="UniProtKB-UniRule"/>
</dbReference>
<dbReference type="GO" id="GO:0016114">
    <property type="term" value="P:terpenoid biosynthetic process"/>
    <property type="evidence" value="ECO:0007669"/>
    <property type="project" value="InterPro"/>
</dbReference>
<dbReference type="CDD" id="cd00554">
    <property type="entry name" value="MECDP_synthase"/>
    <property type="match status" value="1"/>
</dbReference>
<dbReference type="FunFam" id="3.30.1330.50:FF:000001">
    <property type="entry name" value="2-C-methyl-D-erythritol 2,4-cyclodiphosphate synthase"/>
    <property type="match status" value="1"/>
</dbReference>
<dbReference type="Gene3D" id="3.30.1330.50">
    <property type="entry name" value="2-C-methyl-D-erythritol 2,4-cyclodiphosphate synthase"/>
    <property type="match status" value="1"/>
</dbReference>
<dbReference type="HAMAP" id="MF_00107">
    <property type="entry name" value="IspF"/>
    <property type="match status" value="1"/>
</dbReference>
<dbReference type="InterPro" id="IPR003526">
    <property type="entry name" value="MECDP_synthase"/>
</dbReference>
<dbReference type="InterPro" id="IPR020555">
    <property type="entry name" value="MECDP_synthase_CS"/>
</dbReference>
<dbReference type="InterPro" id="IPR036571">
    <property type="entry name" value="MECDP_synthase_sf"/>
</dbReference>
<dbReference type="NCBIfam" id="TIGR00151">
    <property type="entry name" value="ispF"/>
    <property type="match status" value="1"/>
</dbReference>
<dbReference type="PANTHER" id="PTHR43181">
    <property type="entry name" value="2-C-METHYL-D-ERYTHRITOL 2,4-CYCLODIPHOSPHATE SYNTHASE, CHLOROPLASTIC"/>
    <property type="match status" value="1"/>
</dbReference>
<dbReference type="PANTHER" id="PTHR43181:SF1">
    <property type="entry name" value="2-C-METHYL-D-ERYTHRITOL 2,4-CYCLODIPHOSPHATE SYNTHASE, CHLOROPLASTIC"/>
    <property type="match status" value="1"/>
</dbReference>
<dbReference type="Pfam" id="PF02542">
    <property type="entry name" value="YgbB"/>
    <property type="match status" value="1"/>
</dbReference>
<dbReference type="SUPFAM" id="SSF69765">
    <property type="entry name" value="IpsF-like"/>
    <property type="match status" value="1"/>
</dbReference>
<dbReference type="PROSITE" id="PS01350">
    <property type="entry name" value="ISPF"/>
    <property type="match status" value="1"/>
</dbReference>
<accession>A6V1G1</accession>
<feature type="chain" id="PRO_1000022860" description="2-C-methyl-D-erythritol 2,4-cyclodiphosphate synthase">
    <location>
        <begin position="1"/>
        <end position="157"/>
    </location>
</feature>
<feature type="binding site" evidence="1">
    <location>
        <begin position="8"/>
        <end position="10"/>
    </location>
    <ligand>
        <name>4-CDP-2-C-methyl-D-erythritol 2-phosphate</name>
        <dbReference type="ChEBI" id="CHEBI:57919"/>
    </ligand>
</feature>
<feature type="binding site" evidence="1">
    <location>
        <position position="8"/>
    </location>
    <ligand>
        <name>a divalent metal cation</name>
        <dbReference type="ChEBI" id="CHEBI:60240"/>
    </ligand>
</feature>
<feature type="binding site" evidence="1">
    <location>
        <position position="10"/>
    </location>
    <ligand>
        <name>a divalent metal cation</name>
        <dbReference type="ChEBI" id="CHEBI:60240"/>
    </ligand>
</feature>
<feature type="binding site" evidence="1">
    <location>
        <begin position="34"/>
        <end position="35"/>
    </location>
    <ligand>
        <name>4-CDP-2-C-methyl-D-erythritol 2-phosphate</name>
        <dbReference type="ChEBI" id="CHEBI:57919"/>
    </ligand>
</feature>
<feature type="binding site" evidence="1">
    <location>
        <position position="42"/>
    </location>
    <ligand>
        <name>a divalent metal cation</name>
        <dbReference type="ChEBI" id="CHEBI:60240"/>
    </ligand>
</feature>
<feature type="binding site" evidence="1">
    <location>
        <begin position="56"/>
        <end position="58"/>
    </location>
    <ligand>
        <name>4-CDP-2-C-methyl-D-erythritol 2-phosphate</name>
        <dbReference type="ChEBI" id="CHEBI:57919"/>
    </ligand>
</feature>
<feature type="binding site" evidence="1">
    <location>
        <begin position="61"/>
        <end position="65"/>
    </location>
    <ligand>
        <name>4-CDP-2-C-methyl-D-erythritol 2-phosphate</name>
        <dbReference type="ChEBI" id="CHEBI:57919"/>
    </ligand>
</feature>
<feature type="binding site" evidence="1">
    <location>
        <begin position="100"/>
        <end position="106"/>
    </location>
    <ligand>
        <name>4-CDP-2-C-methyl-D-erythritol 2-phosphate</name>
        <dbReference type="ChEBI" id="CHEBI:57919"/>
    </ligand>
</feature>
<feature type="binding site" evidence="1">
    <location>
        <begin position="132"/>
        <end position="135"/>
    </location>
    <ligand>
        <name>4-CDP-2-C-methyl-D-erythritol 2-phosphate</name>
        <dbReference type="ChEBI" id="CHEBI:57919"/>
    </ligand>
</feature>
<feature type="binding site" evidence="1">
    <location>
        <position position="139"/>
    </location>
    <ligand>
        <name>4-CDP-2-C-methyl-D-erythritol 2-phosphate</name>
        <dbReference type="ChEBI" id="CHEBI:57919"/>
    </ligand>
</feature>
<feature type="binding site" evidence="1">
    <location>
        <position position="142"/>
    </location>
    <ligand>
        <name>4-CDP-2-C-methyl-D-erythritol 2-phosphate</name>
        <dbReference type="ChEBI" id="CHEBI:57919"/>
    </ligand>
</feature>
<feature type="site" description="Transition state stabilizer" evidence="1">
    <location>
        <position position="34"/>
    </location>
</feature>
<feature type="site" description="Transition state stabilizer" evidence="1">
    <location>
        <position position="133"/>
    </location>
</feature>
<protein>
    <recommendedName>
        <fullName evidence="1">2-C-methyl-D-erythritol 2,4-cyclodiphosphate synthase</fullName>
        <shortName evidence="1">MECDP-synthase</shortName>
        <shortName evidence="1">MECPP-synthase</shortName>
        <shortName evidence="1">MECPS</shortName>
        <ecNumber evidence="1">4.6.1.12</ecNumber>
    </recommendedName>
</protein>
<sequence length="157" mass="16692">MRIGHGYDVHRFGEGDYITLGGVRIPHKHGLVAHSDGDVLLHALSDALLGAAALGDIGKHFPDTDPRFKGADSRALLRHVVAIVAEKGWKVGNVDATIVAQAPKMAPHIETMRGLIAEDLGVALDQVNVKATTTERLGFTGREEGIAVHAVALLMAR</sequence>
<comment type="function">
    <text evidence="1">Involved in the biosynthesis of isopentenyl diphosphate (IPP) and dimethylallyl diphosphate (DMAPP), two major building blocks of isoprenoid compounds. Catalyzes the conversion of 4-diphosphocytidyl-2-C-methyl-D-erythritol 2-phosphate (CDP-ME2P) to 2-C-methyl-D-erythritol 2,4-cyclodiphosphate (ME-CPP) with a corresponding release of cytidine 5-monophosphate (CMP).</text>
</comment>
<comment type="catalytic activity">
    <reaction evidence="1">
        <text>4-CDP-2-C-methyl-D-erythritol 2-phosphate = 2-C-methyl-D-erythritol 2,4-cyclic diphosphate + CMP</text>
        <dbReference type="Rhea" id="RHEA:23864"/>
        <dbReference type="ChEBI" id="CHEBI:57919"/>
        <dbReference type="ChEBI" id="CHEBI:58483"/>
        <dbReference type="ChEBI" id="CHEBI:60377"/>
        <dbReference type="EC" id="4.6.1.12"/>
    </reaction>
</comment>
<comment type="cofactor">
    <cofactor evidence="1">
        <name>a divalent metal cation</name>
        <dbReference type="ChEBI" id="CHEBI:60240"/>
    </cofactor>
    <text evidence="1">Binds 1 divalent metal cation per subunit.</text>
</comment>
<comment type="pathway">
    <text evidence="1">Isoprenoid biosynthesis; isopentenyl diphosphate biosynthesis via DXP pathway; isopentenyl diphosphate from 1-deoxy-D-xylulose 5-phosphate: step 4/6.</text>
</comment>
<comment type="subunit">
    <text evidence="1">Homotrimer.</text>
</comment>
<comment type="similarity">
    <text evidence="1">Belongs to the IspF family.</text>
</comment>
<gene>
    <name evidence="1" type="primary">ispF</name>
    <name type="ordered locus">PSPA7_1512</name>
</gene>
<proteinExistence type="inferred from homology"/>
<name>ISPF_PSEP7</name>
<evidence type="ECO:0000255" key="1">
    <source>
        <dbReference type="HAMAP-Rule" id="MF_00107"/>
    </source>
</evidence>
<organism>
    <name type="scientific">Pseudomonas paraeruginosa (strain DSM 24068 / PA7)</name>
    <name type="common">Pseudomonas aeruginosa (strain PA7)</name>
    <dbReference type="NCBI Taxonomy" id="381754"/>
    <lineage>
        <taxon>Bacteria</taxon>
        <taxon>Pseudomonadati</taxon>
        <taxon>Pseudomonadota</taxon>
        <taxon>Gammaproteobacteria</taxon>
        <taxon>Pseudomonadales</taxon>
        <taxon>Pseudomonadaceae</taxon>
        <taxon>Pseudomonas</taxon>
        <taxon>Pseudomonas paraeruginosa</taxon>
    </lineage>
</organism>
<reference key="1">
    <citation type="submission" date="2007-06" db="EMBL/GenBank/DDBJ databases">
        <authorList>
            <person name="Dodson R.J."/>
            <person name="Harkins D."/>
            <person name="Paulsen I.T."/>
        </authorList>
    </citation>
    <scope>NUCLEOTIDE SEQUENCE [LARGE SCALE GENOMIC DNA]</scope>
    <source>
        <strain>DSM 24068 / PA7</strain>
    </source>
</reference>
<keyword id="KW-0414">Isoprene biosynthesis</keyword>
<keyword id="KW-0456">Lyase</keyword>
<keyword id="KW-0479">Metal-binding</keyword>